<keyword id="KW-0963">Cytoplasm</keyword>
<keyword id="KW-0209">Deafness</keyword>
<keyword id="KW-0217">Developmental protein</keyword>
<keyword id="KW-0238">DNA-binding</keyword>
<keyword id="KW-0479">Metal-binding</keyword>
<keyword id="KW-0539">Nucleus</keyword>
<keyword id="KW-1267">Proteomics identification</keyword>
<keyword id="KW-1185">Reference proteome</keyword>
<keyword id="KW-0677">Repeat</keyword>
<keyword id="KW-0678">Repressor</keyword>
<keyword id="KW-0804">Transcription</keyword>
<keyword id="KW-0805">Transcription regulation</keyword>
<keyword id="KW-0832">Ubl conjugation</keyword>
<keyword id="KW-0897">Waardenburg syndrome</keyword>
<keyword id="KW-0862">Zinc</keyword>
<keyword id="KW-0863">Zinc-finger</keyword>
<gene>
    <name type="primary">SNAI2</name>
    <name type="synonym">SLUG</name>
    <name type="synonym">SLUGH</name>
</gene>
<protein>
    <recommendedName>
        <fullName>Zinc finger protein SNAI2</fullName>
    </recommendedName>
    <alternativeName>
        <fullName>Neural crest transcription factor Slug</fullName>
    </alternativeName>
    <alternativeName>
        <fullName>Protein snail homolog 2</fullName>
    </alternativeName>
</protein>
<evidence type="ECO:0000250" key="1"/>
<evidence type="ECO:0000250" key="2">
    <source>
        <dbReference type="UniProtKB" id="O95863"/>
    </source>
</evidence>
<evidence type="ECO:0000255" key="3">
    <source>
        <dbReference type="PROSITE-ProRule" id="PRU00042"/>
    </source>
</evidence>
<evidence type="ECO:0000256" key="4">
    <source>
        <dbReference type="SAM" id="MobiDB-lite"/>
    </source>
</evidence>
<evidence type="ECO:0000269" key="5">
    <source>
    </source>
</evidence>
<evidence type="ECO:0000269" key="6">
    <source>
    </source>
</evidence>
<evidence type="ECO:0000269" key="7">
    <source>
    </source>
</evidence>
<evidence type="ECO:0000269" key="8">
    <source>
    </source>
</evidence>
<evidence type="ECO:0000269" key="9">
    <source>
    </source>
</evidence>
<evidence type="ECO:0000269" key="10">
    <source>
    </source>
</evidence>
<evidence type="ECO:0000269" key="11">
    <source>
    </source>
</evidence>
<evidence type="ECO:0000269" key="12">
    <source>
    </source>
</evidence>
<evidence type="ECO:0000269" key="13">
    <source>
    </source>
</evidence>
<evidence type="ECO:0000269" key="14">
    <source>
    </source>
</evidence>
<evidence type="ECO:0000269" key="15">
    <source>
    </source>
</evidence>
<evidence type="ECO:0000269" key="16">
    <source>
    </source>
</evidence>
<evidence type="ECO:0000269" key="17">
    <source>
    </source>
</evidence>
<evidence type="ECO:0000305" key="18"/>
<evidence type="ECO:0000305" key="19">
    <source>
    </source>
</evidence>
<reference key="1">
    <citation type="journal article" date="2000" name="Mol. Cell. Biol.">
        <title>Human Slug is a repressor that localizes to sites of active transcription.</title>
        <authorList>
            <person name="Hemavathy K."/>
            <person name="Guru S.C."/>
            <person name="Harris J."/>
            <person name="Chen J.D."/>
            <person name="Ip Y.T."/>
        </authorList>
    </citation>
    <scope>NUCLEOTIDE SEQUENCE [MRNA]</scope>
    <scope>FUNCTION</scope>
    <scope>SUBCELLULAR LOCATION</scope>
    <scope>TISSUE SPECIFICITY</scope>
    <source>
        <tissue>Melanocyte</tissue>
    </source>
</reference>
<reference key="2">
    <citation type="journal article" date="1998" name="Genomics">
        <title>Human SLUG gene organization, expression, and chromosome map location on 8q.</title>
        <authorList>
            <person name="Cohen M.E."/>
            <person name="Yin M."/>
            <person name="Paznekas W.A."/>
            <person name="Schertzer M."/>
            <person name="Wood S."/>
            <person name="Jabs E.W."/>
        </authorList>
    </citation>
    <scope>NUCLEOTIDE SEQUENCE [GENOMIC DNA]</scope>
</reference>
<reference key="3">
    <citation type="journal article" date="1999" name="Mutat. Res.">
        <title>Human transcription factor SLUG: mutation analysis in patients with neural tube defects and identification of a missense mutation (D119E) in the Slug subfamily-defining region.</title>
        <authorList>
            <person name="Stegmann K."/>
            <person name="Boecker J."/>
            <person name="Kosan C."/>
            <person name="Ermert A."/>
            <person name="Kunz J."/>
            <person name="Koch M.C."/>
        </authorList>
    </citation>
    <scope>NUCLEOTIDE SEQUENCE [GENOMIC DNA]</scope>
    <scope>VARIANT GLU-119</scope>
</reference>
<reference key="4">
    <citation type="journal article" date="2004" name="Nat. Genet.">
        <title>Complete sequencing and characterization of 21,243 full-length human cDNAs.</title>
        <authorList>
            <person name="Ota T."/>
            <person name="Suzuki Y."/>
            <person name="Nishikawa T."/>
            <person name="Otsuki T."/>
            <person name="Sugiyama T."/>
            <person name="Irie R."/>
            <person name="Wakamatsu A."/>
            <person name="Hayashi K."/>
            <person name="Sato H."/>
            <person name="Nagai K."/>
            <person name="Kimura K."/>
            <person name="Makita H."/>
            <person name="Sekine M."/>
            <person name="Obayashi M."/>
            <person name="Nishi T."/>
            <person name="Shibahara T."/>
            <person name="Tanaka T."/>
            <person name="Ishii S."/>
            <person name="Yamamoto J."/>
            <person name="Saito K."/>
            <person name="Kawai Y."/>
            <person name="Isono Y."/>
            <person name="Nakamura Y."/>
            <person name="Nagahari K."/>
            <person name="Murakami K."/>
            <person name="Yasuda T."/>
            <person name="Iwayanagi T."/>
            <person name="Wagatsuma M."/>
            <person name="Shiratori A."/>
            <person name="Sudo H."/>
            <person name="Hosoiri T."/>
            <person name="Kaku Y."/>
            <person name="Kodaira H."/>
            <person name="Kondo H."/>
            <person name="Sugawara M."/>
            <person name="Takahashi M."/>
            <person name="Kanda K."/>
            <person name="Yokoi T."/>
            <person name="Furuya T."/>
            <person name="Kikkawa E."/>
            <person name="Omura Y."/>
            <person name="Abe K."/>
            <person name="Kamihara K."/>
            <person name="Katsuta N."/>
            <person name="Sato K."/>
            <person name="Tanikawa M."/>
            <person name="Yamazaki M."/>
            <person name="Ninomiya K."/>
            <person name="Ishibashi T."/>
            <person name="Yamashita H."/>
            <person name="Murakawa K."/>
            <person name="Fujimori K."/>
            <person name="Tanai H."/>
            <person name="Kimata M."/>
            <person name="Watanabe M."/>
            <person name="Hiraoka S."/>
            <person name="Chiba Y."/>
            <person name="Ishida S."/>
            <person name="Ono Y."/>
            <person name="Takiguchi S."/>
            <person name="Watanabe S."/>
            <person name="Yosida M."/>
            <person name="Hotuta T."/>
            <person name="Kusano J."/>
            <person name="Kanehori K."/>
            <person name="Takahashi-Fujii A."/>
            <person name="Hara H."/>
            <person name="Tanase T.-O."/>
            <person name="Nomura Y."/>
            <person name="Togiya S."/>
            <person name="Komai F."/>
            <person name="Hara R."/>
            <person name="Takeuchi K."/>
            <person name="Arita M."/>
            <person name="Imose N."/>
            <person name="Musashino K."/>
            <person name="Yuuki H."/>
            <person name="Oshima A."/>
            <person name="Sasaki N."/>
            <person name="Aotsuka S."/>
            <person name="Yoshikawa Y."/>
            <person name="Matsunawa H."/>
            <person name="Ichihara T."/>
            <person name="Shiohata N."/>
            <person name="Sano S."/>
            <person name="Moriya S."/>
            <person name="Momiyama H."/>
            <person name="Satoh N."/>
            <person name="Takami S."/>
            <person name="Terashima Y."/>
            <person name="Suzuki O."/>
            <person name="Nakagawa S."/>
            <person name="Senoh A."/>
            <person name="Mizoguchi H."/>
            <person name="Goto Y."/>
            <person name="Shimizu F."/>
            <person name="Wakebe H."/>
            <person name="Hishigaki H."/>
            <person name="Watanabe T."/>
            <person name="Sugiyama A."/>
            <person name="Takemoto M."/>
            <person name="Kawakami B."/>
            <person name="Yamazaki M."/>
            <person name="Watanabe K."/>
            <person name="Kumagai A."/>
            <person name="Itakura S."/>
            <person name="Fukuzumi Y."/>
            <person name="Fujimori Y."/>
            <person name="Komiyama M."/>
            <person name="Tashiro H."/>
            <person name="Tanigami A."/>
            <person name="Fujiwara T."/>
            <person name="Ono T."/>
            <person name="Yamada K."/>
            <person name="Fujii Y."/>
            <person name="Ozaki K."/>
            <person name="Hirao M."/>
            <person name="Ohmori Y."/>
            <person name="Kawabata A."/>
            <person name="Hikiji T."/>
            <person name="Kobatake N."/>
            <person name="Inagaki H."/>
            <person name="Ikema Y."/>
            <person name="Okamoto S."/>
            <person name="Okitani R."/>
            <person name="Kawakami T."/>
            <person name="Noguchi S."/>
            <person name="Itoh T."/>
            <person name="Shigeta K."/>
            <person name="Senba T."/>
            <person name="Matsumura K."/>
            <person name="Nakajima Y."/>
            <person name="Mizuno T."/>
            <person name="Morinaga M."/>
            <person name="Sasaki M."/>
            <person name="Togashi T."/>
            <person name="Oyama M."/>
            <person name="Hata H."/>
            <person name="Watanabe M."/>
            <person name="Komatsu T."/>
            <person name="Mizushima-Sugano J."/>
            <person name="Satoh T."/>
            <person name="Shirai Y."/>
            <person name="Takahashi Y."/>
            <person name="Nakagawa K."/>
            <person name="Okumura K."/>
            <person name="Nagase T."/>
            <person name="Nomura N."/>
            <person name="Kikuchi H."/>
            <person name="Masuho Y."/>
            <person name="Yamashita R."/>
            <person name="Nakai K."/>
            <person name="Yada T."/>
            <person name="Nakamura Y."/>
            <person name="Ohara O."/>
            <person name="Isogai T."/>
            <person name="Sugano S."/>
        </authorList>
    </citation>
    <scope>NUCLEOTIDE SEQUENCE [LARGE SCALE MRNA]</scope>
</reference>
<reference key="5">
    <citation type="submission" date="2005-04" db="EMBL/GenBank/DDBJ databases">
        <authorList>
            <person name="Totoki Y."/>
            <person name="Toyoda A."/>
            <person name="Takeda T."/>
            <person name="Sakaki Y."/>
            <person name="Tanaka A."/>
            <person name="Yokoyama S."/>
        </authorList>
    </citation>
    <scope>NUCLEOTIDE SEQUENCE [LARGE SCALE MRNA]</scope>
    <source>
        <tissue>Dermoid cancer</tissue>
    </source>
</reference>
<reference key="6">
    <citation type="submission" date="2005-07" db="EMBL/GenBank/DDBJ databases">
        <authorList>
            <person name="Mural R.J."/>
            <person name="Istrail S."/>
            <person name="Sutton G.G."/>
            <person name="Florea L."/>
            <person name="Halpern A.L."/>
            <person name="Mobarry C.M."/>
            <person name="Lippert R."/>
            <person name="Walenz B."/>
            <person name="Shatkay H."/>
            <person name="Dew I."/>
            <person name="Miller J.R."/>
            <person name="Flanigan M.J."/>
            <person name="Edwards N.J."/>
            <person name="Bolanos R."/>
            <person name="Fasulo D."/>
            <person name="Halldorsson B.V."/>
            <person name="Hannenhalli S."/>
            <person name="Turner R."/>
            <person name="Yooseph S."/>
            <person name="Lu F."/>
            <person name="Nusskern D.R."/>
            <person name="Shue B.C."/>
            <person name="Zheng X.H."/>
            <person name="Zhong F."/>
            <person name="Delcher A.L."/>
            <person name="Huson D.H."/>
            <person name="Kravitz S.A."/>
            <person name="Mouchard L."/>
            <person name="Reinert K."/>
            <person name="Remington K.A."/>
            <person name="Clark A.G."/>
            <person name="Waterman M.S."/>
            <person name="Eichler E.E."/>
            <person name="Adams M.D."/>
            <person name="Hunkapiller M.W."/>
            <person name="Myers E.W."/>
            <person name="Venter J.C."/>
        </authorList>
    </citation>
    <scope>NUCLEOTIDE SEQUENCE [LARGE SCALE GENOMIC DNA]</scope>
</reference>
<reference key="7">
    <citation type="journal article" date="2004" name="Genome Res.">
        <title>The status, quality, and expansion of the NIH full-length cDNA project: the Mammalian Gene Collection (MGC).</title>
        <authorList>
            <consortium name="The MGC Project Team"/>
        </authorList>
    </citation>
    <scope>NUCLEOTIDE SEQUENCE [LARGE SCALE MRNA]</scope>
    <source>
        <tissue>Uterus</tissue>
    </source>
</reference>
<reference key="8">
    <citation type="journal article" date="2002" name="Cancer Res.">
        <title>The SLUG zinc-finger protein represses E-cadherin in breast cancer.</title>
        <authorList>
            <person name="Hajra K.M."/>
            <person name="Chen D.Y."/>
            <person name="Fearon E.R."/>
        </authorList>
    </citation>
    <scope>FUNCTION</scope>
</reference>
<reference key="9">
    <citation type="journal article" date="2002" name="Hum. Mol. Genet.">
        <title>SLUG (SNAI2) deletions in patients with Waardenburg disease.</title>
        <authorList>
            <person name="Sanchez-Martin M."/>
            <person name="Rodriguez-Garcia A."/>
            <person name="Perez-Losada J."/>
            <person name="Sagrera A."/>
            <person name="Read A.P."/>
            <person name="Sanchez-Garcia I."/>
        </authorList>
    </citation>
    <scope>INVOLVEMENT IN WS2D</scope>
</reference>
<reference key="10">
    <citation type="journal article" date="2003" name="Am. J. Med. Genet. A">
        <title>Deletion of the SLUG (SNAI2) gene results in human piebaldism.</title>
        <authorList>
            <person name="Sanchez-Martin M."/>
            <person name="Perez-Losada J."/>
            <person name="Rodriguez-Garcia A."/>
            <person name="Gonzalez-Sanchez B."/>
            <person name="Korf B.R."/>
            <person name="Kuster W."/>
            <person name="Moss C."/>
            <person name="Spritz R.A."/>
            <person name="Sanchez-Garcia I."/>
        </authorList>
    </citation>
    <scope>INVOLVEMENT IN PBT</scope>
</reference>
<reference key="11">
    <citation type="journal article" date="2005" name="J. Biol. Chem.">
        <title>Regulation of BRCA2 gene expression by the SLUG repressor protein in human breast cells.</title>
        <authorList>
            <person name="Tripathi M.K."/>
            <person name="Misra S."/>
            <person name="Khedkar S.V."/>
            <person name="Hamilton N."/>
            <person name="Irvin-Wilson C."/>
            <person name="Sharan C."/>
            <person name="Sealy L."/>
            <person name="Chaudhuri G."/>
        </authorList>
    </citation>
    <scope>FUNCTION</scope>
</reference>
<reference key="12">
    <citation type="journal article" date="2006" name="J. Biol. Chem.">
        <title>Slug regulates integrin expression and cell proliferation in human epidermal keratinocytes.</title>
        <authorList>
            <person name="Turner F.E."/>
            <person name="Broad S."/>
            <person name="Khanim F.L."/>
            <person name="Jeanes A."/>
            <person name="Talma S."/>
            <person name="Hughes S."/>
            <person name="Tselepis C."/>
            <person name="Hotchin N.A."/>
        </authorList>
    </citation>
    <scope>FUNCTION</scope>
    <scope>SUBCELLULAR LOCATION</scope>
    <scope>TISSUE SPECIFICITY</scope>
</reference>
<reference key="13">
    <citation type="journal article" date="2009" name="Cell. Mol. Life Sci.">
        <title>Slug gene expression supports human osteoblast maturation.</title>
        <authorList>
            <person name="Lambertini E."/>
            <person name="Lisignoli G."/>
            <person name="Torreggiani E."/>
            <person name="Manferdini C."/>
            <person name="Gabusi E."/>
            <person name="Franceschetti T."/>
            <person name="Penolazzi L."/>
            <person name="Gambari R."/>
            <person name="Facchini A."/>
            <person name="Piva R."/>
        </authorList>
    </citation>
    <scope>FUNCTION</scope>
    <scope>TISSUE SPECIFICITY</scope>
</reference>
<reference key="14">
    <citation type="journal article" date="2009" name="J. Cell Sci.">
        <title>Characterization of Snail nuclear import pathways as representatives of C2H2 zinc finger transcription factors.</title>
        <authorList>
            <person name="Mingot J.M."/>
            <person name="Vega S."/>
            <person name="Maestro B."/>
            <person name="Sanz J.M."/>
            <person name="Nieto M.A."/>
        </authorList>
    </citation>
    <scope>INTERACTION WITH KPNA2; KPNB1; TNPO1 AND IPO7</scope>
    <scope>MUTAGENESIS OF LYS-166; LYS-175; LYS-192; ARG-196; ARG-225 AND ARG-229</scope>
</reference>
<reference key="15">
    <citation type="journal article" date="2011" name="Exp. Cell Res.">
        <title>Slug contributes to the regulation of CXCL12 expression in human osteoblasts.</title>
        <authorList>
            <person name="Piva R."/>
            <person name="Manferdini C."/>
            <person name="Lambertini E."/>
            <person name="Torreggiani E."/>
            <person name="Penolazzi L."/>
            <person name="Gambari R."/>
            <person name="Pastore A."/>
            <person name="Pelucchi S."/>
            <person name="Gabusi E."/>
            <person name="Piacentini A."/>
            <person name="Filardo G."/>
            <person name="Facchini A."/>
            <person name="Lisignoli G."/>
        </authorList>
    </citation>
    <scope>FUNCTION</scope>
    <scope>TISSUE SPECIFICITY</scope>
</reference>
<reference key="16">
    <citation type="journal article" date="2012" name="FEBS J.">
        <title>Functional regulation of Slug/Snail2 is dependent on GSK-3beta-mediated phosphorylation.</title>
        <authorList>
            <person name="Kim J.Y."/>
            <person name="Kim Y.M."/>
            <person name="Yang C.H."/>
            <person name="Cho S.K."/>
            <person name="Lee J.W."/>
            <person name="Cho M."/>
        </authorList>
    </citation>
    <scope>SUBCELLULAR LOCATION</scope>
    <scope>PHOSPHORYLATION</scope>
    <scope>MUTAGENESIS OF SER-87; SER-92; SER-96; SER-100 AND SER-104</scope>
</reference>
<reference key="17">
    <citation type="journal article" date="2015" name="Cancer Lett.">
        <title>FBXO11 promotes ubiquitination of the Snail family of transcription factors in cancer progression and epidermal development.</title>
        <authorList>
            <person name="Jin Y."/>
            <person name="Shenoy A.K."/>
            <person name="Doernberg S."/>
            <person name="Chen H."/>
            <person name="Luo H."/>
            <person name="Shen H."/>
            <person name="Lin T."/>
            <person name="Tarrash M."/>
            <person name="Cai Q."/>
            <person name="Hu X."/>
            <person name="Fiske R."/>
            <person name="Chen T."/>
            <person name="Wu L."/>
            <person name="Mohammed K.A."/>
            <person name="Rottiers V."/>
            <person name="Lee S.S."/>
            <person name="Lu J."/>
        </authorList>
    </citation>
    <scope>UBIQUITINATION</scope>
</reference>
<reference key="18">
    <citation type="journal article" date="2016" name="Oncogene">
        <title>Syntenin regulates TGF-beta1-induced Smad activation and the epithelial-to-mesenchymal transition by inhibiting caveolin-mediated TGF-beta type I receptor internalization.</title>
        <authorList>
            <person name="Hwangbo C."/>
            <person name="Tae N."/>
            <person name="Lee S."/>
            <person name="Kim O."/>
            <person name="Park O.K."/>
            <person name="Kim J."/>
            <person name="Kwon S.H."/>
            <person name="Lee J.H."/>
        </authorList>
    </citation>
    <scope>SUBCELLULAR LOCATION</scope>
</reference>
<reference key="19">
    <citation type="journal article" date="2018" name="Stem Cell Reports">
        <title>DSG2 Is a Functional Cell Surface Marker for Identification and Isolation of Human Pluripotent Stem Cells.</title>
        <authorList>
            <person name="Park J."/>
            <person name="Son Y."/>
            <person name="Lee N.G."/>
            <person name="Lee K."/>
            <person name="Lee D.G."/>
            <person name="Song J."/>
            <person name="Lee J."/>
            <person name="Kim S."/>
            <person name="Cho M.J."/>
            <person name="Jang J.H."/>
            <person name="Lee J."/>
            <person name="Park J.G."/>
            <person name="Kim Y.G."/>
            <person name="Kim J.S."/>
            <person name="Lee J."/>
            <person name="Cho Y.S."/>
            <person name="Park Y.J."/>
            <person name="Han B.S."/>
            <person name="Bae K.H."/>
            <person name="Han S."/>
            <person name="Kang B."/>
            <person name="Haam S."/>
            <person name="Lee S.H."/>
            <person name="Lee S.C."/>
            <person name="Min J.K."/>
        </authorList>
    </citation>
    <scope>SUBCELLULAR LOCATION</scope>
</reference>
<proteinExistence type="evidence at protein level"/>
<feature type="chain" id="PRO_0000047032" description="Zinc finger protein SNAI2">
    <location>
        <begin position="1"/>
        <end position="268"/>
    </location>
</feature>
<feature type="zinc finger region" description="C2H2-type 1" evidence="3">
    <location>
        <begin position="128"/>
        <end position="150"/>
    </location>
</feature>
<feature type="zinc finger region" description="C2H2-type 2" evidence="3">
    <location>
        <begin position="159"/>
        <end position="181"/>
    </location>
</feature>
<feature type="zinc finger region" description="C2H2-type 3" evidence="3">
    <location>
        <begin position="185"/>
        <end position="207"/>
    </location>
</feature>
<feature type="zinc finger region" description="C2H2-type 4" evidence="3">
    <location>
        <begin position="213"/>
        <end position="235"/>
    </location>
</feature>
<feature type="zinc finger region" description="C2H2-type 5; atypical" evidence="3">
    <location>
        <begin position="241"/>
        <end position="264"/>
    </location>
</feature>
<feature type="region of interest" description="SNAG domain" evidence="2">
    <location>
        <begin position="1"/>
        <end position="20"/>
    </location>
</feature>
<feature type="region of interest" description="Disordered" evidence="4">
    <location>
        <begin position="80"/>
        <end position="117"/>
    </location>
</feature>
<feature type="sequence variant" id="VAR_069163" description="In dbSNP:rs11544360.">
    <original>P</original>
    <variation>T</variation>
    <location>
        <position position="31"/>
    </location>
</feature>
<feature type="sequence variant" id="VAR_009873" description="In a patient with neural tube defects; dbSNP:rs748917911." evidence="5">
    <original>D</original>
    <variation>E</variation>
    <location>
        <position position="119"/>
    </location>
</feature>
<feature type="sequence variant" id="VAR_069164" description="In dbSNP:rs13280993.">
    <original>T</original>
    <variation>I</variation>
    <location>
        <position position="234"/>
    </location>
</feature>
<feature type="mutagenesis site" description="Increases protein stability. Does not affect repressor activity on E-cadherin/CDH1 promoter." evidence="15">
    <original>S</original>
    <variation>A</variation>
    <location>
        <position position="87"/>
    </location>
</feature>
<feature type="mutagenesis site" description="Increases protein stability, nuclear accumulation and repressor activity on E-cadherin/CDH1 promoter; when associated with A-96." evidence="15">
    <original>S</original>
    <variation>A</variation>
    <location>
        <position position="92"/>
    </location>
</feature>
<feature type="mutagenesis site" description="Increases protein stability, nuclear accumulation and repressor activity on E-cadherin/CDH1 promoter; when associated with A-92." evidence="15">
    <original>S</original>
    <variation>A</variation>
    <location>
        <position position="96"/>
    </location>
</feature>
<feature type="mutagenesis site" description="Increases protein stability and half-life, nuclear accumulation and repressor activity on E-cadherin/CDH1 promoter; when associated with A-104." evidence="15">
    <original>S</original>
    <variation>A</variation>
    <location>
        <position position="100"/>
    </location>
</feature>
<feature type="mutagenesis site" description="Increases protein stability and half-life, nuclear accumulation and repressor activity on E-cadherin/CDH1 promoter; when associated with A-100." evidence="15">
    <original>S</original>
    <variation>A</variation>
    <location>
        <position position="104"/>
    </location>
</feature>
<feature type="mutagenesis site" description="Abolishes binding to KPNA2, KPNB1 and IPO7 and impairs binding to TMPO1; when associated with E-175." evidence="12">
    <original>K</original>
    <variation>E</variation>
    <location>
        <position position="166"/>
    </location>
</feature>
<feature type="mutagenesis site" description="Abolishes binding to KPNA2, KPNB1 and IPO7 and impairs binding to TMPO1; when associated with E-166." evidence="12">
    <original>K</original>
    <variation>E</variation>
    <location>
        <position position="175"/>
    </location>
</feature>
<feature type="mutagenesis site" description="Abolishes binding to KPNA2 and impairs binding to KPNB1, IPO7 and TMPO1; when associated with E-196." evidence="12">
    <original>K</original>
    <variation>E</variation>
    <location>
        <position position="192"/>
    </location>
</feature>
<feature type="mutagenesis site" description="Abolishes binding to KPNA2 and impairs binding to KPNB1, IPO7 and TMPO1; when associated with E-192." evidence="12">
    <original>R</original>
    <variation>E</variation>
    <location>
        <position position="196"/>
    </location>
</feature>
<feature type="mutagenesis site" description="Abolishes binding to KPNA2, KPNB1 and IPO7 and impairs binding to TMPO1; when associated with E-229." evidence="12">
    <original>R</original>
    <variation>E</variation>
    <location>
        <position position="225"/>
    </location>
</feature>
<feature type="mutagenesis site" description="Abolishes binding to KPNA2, KPNB1 and IPO7 and impairs binding to TMPO1; when associated with E-225." evidence="12">
    <original>R</original>
    <variation>E</variation>
    <location>
        <position position="229"/>
    </location>
</feature>
<feature type="sequence conflict" description="In Ref. 5; BAD97088." evidence="18" ref="5">
    <original>E</original>
    <variation>K</variation>
    <location>
        <position position="126"/>
    </location>
</feature>
<sequence>MPRSFLVKKHFNASKKPNYSELDTHTVIISPYLYESYSMPVIPQPEILSSGAYSPITVWTTAAPFHAQLPNGLSPLSGYSSSLGRVSPPPPSDTSSKDHSGSESPISDEEERLQSKLSDPHAIEAEKFQCNLCNKTYSTFSGLAKHKQLHCDAQSRKSFSCKYCDKEYVSLGALKMHIRTHTLPCVCKICGKAFSRPWLLQGHIRTHTGEKPFSCPHCNRAFADRSNLRAHLQTHSDVKKYQCKNCSKTFSRMSLLHKHEESGCCVAH</sequence>
<comment type="function">
    <text evidence="1 6 7 10 11 13 14">Transcriptional repressor that modulates both activator-dependent and basal transcription. Involved in the generation and migration of neural crest cells. Plays a role in mediating RAF1-induced transcriptional repression of the TJ protein, occludin (OCLN) and subsequent oncogenic transformation of epithelial cells (By similarity). Represses BRCA2 expression by binding to its E2-box-containing silencer and recruiting CTBP1 and HDAC1 in breast cells. In epidermal keratinocytes, binds to the E-box in ITGA3 promoter and represses its transcription. Involved in the regulation of ITGB1 and ITGB4 expression and cell adhesion and proliferation in epidermal keratinocytes. Binds to E-box2 domain of BSG and activates its expression during TGFB1-induced epithelial-mesenchymal transition (EMT) in hepatocytes. Represses E-Cadherin/CDH1 transcription via E-box elements. Involved in osteoblast maturation. Binds to RUNX2 and SOC9 promoters and may act as a positive and negative transcription regulator, respectively, in osteoblasts. Binds to CXCL12 promoter via E-box regions in mesenchymal stem cells and osteoblasts. Plays an essential role in TWIST1-induced EMT and its ability to promote invasion and metastasis.</text>
</comment>
<comment type="subunit">
    <text evidence="1 12">Interacts (via SNAG domain) with LIMD1 (via LIM domains), WTIP (via LIM domains) and AJUBA (via LIM domains) (By similarity). Interacts (via zinc fingers) with KPNA2, KPNB1, and TNPO1. May interact (via zinc fingers) with IPO7.</text>
</comment>
<comment type="interaction">
    <interactant intactId="EBI-9876238">
        <id>O43623</id>
    </interactant>
    <interactant intactId="EBI-12011224">
        <id>Q9NPB3</id>
        <label>CABP2</label>
    </interactant>
    <organismsDiffer>false</organismsDiffer>
    <experiments>3</experiments>
</comment>
<comment type="interaction">
    <interactant intactId="EBI-9876238">
        <id>O43623</id>
    </interactant>
    <interactant intactId="EBI-347804">
        <id>P68400</id>
        <label>CSNK2A1</label>
    </interactant>
    <organismsDiffer>false</organismsDiffer>
    <experiments>3</experiments>
</comment>
<comment type="interaction">
    <interactant intactId="EBI-9876238">
        <id>O43623</id>
    </interactant>
    <interactant intactId="EBI-711613">
        <id>P21673</id>
        <label>SAT1</label>
    </interactant>
    <organismsDiffer>false</organismsDiffer>
    <experiments>3</experiments>
</comment>
<comment type="interaction">
    <interactant intactId="EBI-9876238">
        <id>O43623</id>
    </interactant>
    <interactant intactId="EBI-740098">
        <id>P36406</id>
        <label>TRIM23</label>
    </interactant>
    <organismsDiffer>false</organismsDiffer>
    <experiments>3</experiments>
</comment>
<comment type="interaction">
    <interactant intactId="EBI-9876238">
        <id>O43623</id>
    </interactant>
    <interactant intactId="EBI-7254550">
        <id>P36508</id>
        <label>ZNF76</label>
    </interactant>
    <organismsDiffer>false</organismsDiffer>
    <experiments>3</experiments>
</comment>
<comment type="subcellular location">
    <subcellularLocation>
        <location evidence="16 17">Nucleus</location>
    </subcellularLocation>
    <subcellularLocation>
        <location>Cytoplasm</location>
    </subcellularLocation>
    <text>Observed in discrete foci in interphase nuclei. These nuclear foci do not overlap with the nucleoli, the SP100 and the HP1 heterochromatin or the coiled body, suggesting SNAI2 is associated with active transcription or active splicing regions.</text>
</comment>
<comment type="tissue specificity">
    <text evidence="6 11 13 14">Expressed in most adult human tissues, including spleen, thymus, prostate, testis, ovary, small intestine, colon, heart, brain, placenta, lung, liver, skeletal muscle, kidney and pancreas. Not detected in peripheral blood leukocyte. Expressed in the dermis and in all layers of the epidermis, with high levels of expression in the basal layers (at protein level). Expressed in osteoblasts (at protein level). Expressed in mesenchymal stem cells (at protein level). Expressed in breast tumor cells (at protein level).</text>
</comment>
<comment type="domain">
    <text>Repression activity depends on the C-terminal DNA-binding zinc fingers and on the N-terminal repression domain.</text>
</comment>
<comment type="PTM">
    <text evidence="15">Phosphorylated by GSK3B. Once phosphorylated, it becomes a target for ubiquitination.</text>
</comment>
<comment type="PTM">
    <text evidence="19">Ubiquitinated by the SCF(FBXO11) complex; ubiquitination requires previous GSK3B-mediated SNAI2 phosphorylation (PubMed:25827072).</text>
</comment>
<comment type="disease" evidence="8">
    <disease id="DI-01136">
        <name>Waardenburg syndrome 2D</name>
        <acronym>WS2D</acronym>
        <description>WS2 is a genetically heterogeneous, autosomal dominant disorder characterized by sensorineural deafness, pigmentary disturbances, and absence of dystopia canthorum. The frequency of deafness is higher in WS2 than in WS1.</description>
        <dbReference type="MIM" id="608890"/>
    </disease>
    <text>The disease is caused by variants affecting the gene represented in this entry.</text>
</comment>
<comment type="disease" evidence="9">
    <disease id="DI-02164">
        <name>Piebald trait</name>
        <acronym>PBT</acronym>
        <description>Autosomal dominant genetic developmental abnormality of pigmentation characterized by congenital patches of white skin and hair that lack melanocytes.</description>
        <dbReference type="MIM" id="172800"/>
    </disease>
    <text>The disease is caused by variants affecting the gene represented in this entry.</text>
</comment>
<comment type="similarity">
    <text evidence="18">Belongs to the snail C2H2-type zinc-finger protein family.</text>
</comment>
<comment type="online information" name="Atlas of Genetics and Cytogenetics in Oncology and Haematology">
    <link uri="https://atlasgeneticsoncology.org/gene/453/SNAI2"/>
</comment>
<accession>O43623</accession>
<accession>B2R6P6</accession>
<accession>Q53FC1</accession>
<organism>
    <name type="scientific">Homo sapiens</name>
    <name type="common">Human</name>
    <dbReference type="NCBI Taxonomy" id="9606"/>
    <lineage>
        <taxon>Eukaryota</taxon>
        <taxon>Metazoa</taxon>
        <taxon>Chordata</taxon>
        <taxon>Craniata</taxon>
        <taxon>Vertebrata</taxon>
        <taxon>Euteleostomi</taxon>
        <taxon>Mammalia</taxon>
        <taxon>Eutheria</taxon>
        <taxon>Euarchontoglires</taxon>
        <taxon>Primates</taxon>
        <taxon>Haplorrhini</taxon>
        <taxon>Catarrhini</taxon>
        <taxon>Hominidae</taxon>
        <taxon>Homo</taxon>
    </lineage>
</organism>
<name>SNAI2_HUMAN</name>
<dbReference type="EMBL" id="AF042001">
    <property type="protein sequence ID" value="AAC34288.1"/>
    <property type="molecule type" value="Genomic_DNA"/>
</dbReference>
<dbReference type="EMBL" id="AF084243">
    <property type="protein sequence ID" value="AAD55240.1"/>
    <property type="molecule type" value="Genomic_DNA"/>
</dbReference>
<dbReference type="EMBL" id="AK312661">
    <property type="protein sequence ID" value="BAG35543.1"/>
    <property type="molecule type" value="mRNA"/>
</dbReference>
<dbReference type="EMBL" id="AK223368">
    <property type="protein sequence ID" value="BAD97088.1"/>
    <property type="molecule type" value="mRNA"/>
</dbReference>
<dbReference type="EMBL" id="CH471068">
    <property type="protein sequence ID" value="EAW86700.1"/>
    <property type="molecule type" value="Genomic_DNA"/>
</dbReference>
<dbReference type="EMBL" id="BC014890">
    <property type="protein sequence ID" value="AAH14890.1"/>
    <property type="molecule type" value="mRNA"/>
</dbReference>
<dbReference type="EMBL" id="BC015895">
    <property type="protein sequence ID" value="AAH15895.1"/>
    <property type="molecule type" value="mRNA"/>
</dbReference>
<dbReference type="CCDS" id="CCDS6146.1"/>
<dbReference type="RefSeq" id="NP_003059.1">
    <property type="nucleotide sequence ID" value="NM_003068.5"/>
</dbReference>
<dbReference type="SMR" id="O43623"/>
<dbReference type="BioGRID" id="112476">
    <property type="interactions" value="47"/>
</dbReference>
<dbReference type="FunCoup" id="O43623">
    <property type="interactions" value="2093"/>
</dbReference>
<dbReference type="IntAct" id="O43623">
    <property type="interactions" value="5"/>
</dbReference>
<dbReference type="STRING" id="9606.ENSP00000020945"/>
<dbReference type="iPTMnet" id="O43623"/>
<dbReference type="PhosphoSitePlus" id="O43623"/>
<dbReference type="BioMuta" id="SNAI2"/>
<dbReference type="jPOST" id="O43623"/>
<dbReference type="MassIVE" id="O43623"/>
<dbReference type="PaxDb" id="9606-ENSP00000380034"/>
<dbReference type="PeptideAtlas" id="O43623"/>
<dbReference type="ProteomicsDB" id="49085"/>
<dbReference type="Antibodypedia" id="3182">
    <property type="antibodies" value="1025 antibodies from 43 providers"/>
</dbReference>
<dbReference type="CPTC" id="O43623">
    <property type="antibodies" value="2 antibodies"/>
</dbReference>
<dbReference type="DNASU" id="6591"/>
<dbReference type="Ensembl" id="ENST00000020945.4">
    <property type="protein sequence ID" value="ENSP00000020945.1"/>
    <property type="gene ID" value="ENSG00000019549.13"/>
</dbReference>
<dbReference type="GeneID" id="6591"/>
<dbReference type="KEGG" id="hsa:6591"/>
<dbReference type="MANE-Select" id="ENST00000020945.4">
    <property type="protein sequence ID" value="ENSP00000020945.1"/>
    <property type="RefSeq nucleotide sequence ID" value="NM_003068.5"/>
    <property type="RefSeq protein sequence ID" value="NP_003059.1"/>
</dbReference>
<dbReference type="UCSC" id="uc003xqp.5">
    <property type="organism name" value="human"/>
</dbReference>
<dbReference type="AGR" id="HGNC:11094"/>
<dbReference type="CTD" id="6591"/>
<dbReference type="DisGeNET" id="6591"/>
<dbReference type="GeneCards" id="SNAI2"/>
<dbReference type="HGNC" id="HGNC:11094">
    <property type="gene designation" value="SNAI2"/>
</dbReference>
<dbReference type="HPA" id="ENSG00000019549">
    <property type="expression patterns" value="Low tissue specificity"/>
</dbReference>
<dbReference type="MalaCards" id="SNAI2"/>
<dbReference type="MIM" id="172800">
    <property type="type" value="phenotype"/>
</dbReference>
<dbReference type="MIM" id="602150">
    <property type="type" value="gene"/>
</dbReference>
<dbReference type="MIM" id="608890">
    <property type="type" value="phenotype"/>
</dbReference>
<dbReference type="neXtProt" id="NX_O43623"/>
<dbReference type="OpenTargets" id="ENSG00000019549"/>
<dbReference type="Orphanet" id="2884">
    <property type="disease" value="Piebaldism"/>
</dbReference>
<dbReference type="Orphanet" id="895">
    <property type="disease" value="Waardenburg syndrome type 2"/>
</dbReference>
<dbReference type="PharmGKB" id="PA35945"/>
<dbReference type="VEuPathDB" id="HostDB:ENSG00000019549"/>
<dbReference type="eggNOG" id="KOG2462">
    <property type="taxonomic scope" value="Eukaryota"/>
</dbReference>
<dbReference type="GeneTree" id="ENSGT00940000154511"/>
<dbReference type="HOGENOM" id="CLU_002678_42_3_1"/>
<dbReference type="InParanoid" id="O43623"/>
<dbReference type="OMA" id="HFNSAKK"/>
<dbReference type="OrthoDB" id="5428132at2759"/>
<dbReference type="PAN-GO" id="O43623">
    <property type="GO annotations" value="3 GO annotations based on evolutionary models"/>
</dbReference>
<dbReference type="PhylomeDB" id="O43623"/>
<dbReference type="TreeFam" id="TF315515"/>
<dbReference type="PathwayCommons" id="O43623"/>
<dbReference type="Reactome" id="R-HSA-8943724">
    <property type="pathway name" value="Regulation of PTEN gene transcription"/>
</dbReference>
<dbReference type="Reactome" id="R-HSA-9856649">
    <property type="pathway name" value="Transcriptional and post-translational regulation of MITF-M expression and activity"/>
</dbReference>
<dbReference type="SignaLink" id="O43623"/>
<dbReference type="SIGNOR" id="O43623"/>
<dbReference type="BioGRID-ORCS" id="6591">
    <property type="hits" value="29 hits in 1174 CRISPR screens"/>
</dbReference>
<dbReference type="CD-CODE" id="91857CE7">
    <property type="entry name" value="Nucleolus"/>
</dbReference>
<dbReference type="GeneWiki" id="SNAI2"/>
<dbReference type="GenomeRNAi" id="6591"/>
<dbReference type="Pharos" id="O43623">
    <property type="development level" value="Tbio"/>
</dbReference>
<dbReference type="PRO" id="PR:O43623"/>
<dbReference type="Proteomes" id="UP000005640">
    <property type="component" value="Chromosome 8"/>
</dbReference>
<dbReference type="RNAct" id="O43623">
    <property type="molecule type" value="protein"/>
</dbReference>
<dbReference type="Bgee" id="ENSG00000019549">
    <property type="expression patterns" value="Expressed in tibia and 174 other cell types or tissues"/>
</dbReference>
<dbReference type="ExpressionAtlas" id="O43623">
    <property type="expression patterns" value="baseline and differential"/>
</dbReference>
<dbReference type="GO" id="GO:0000785">
    <property type="term" value="C:chromatin"/>
    <property type="evidence" value="ECO:0000314"/>
    <property type="project" value="ARUK-UCL"/>
</dbReference>
<dbReference type="GO" id="GO:0005829">
    <property type="term" value="C:cytosol"/>
    <property type="evidence" value="ECO:0000314"/>
    <property type="project" value="HPA"/>
</dbReference>
<dbReference type="GO" id="GO:0005654">
    <property type="term" value="C:nucleoplasm"/>
    <property type="evidence" value="ECO:0000314"/>
    <property type="project" value="HPA"/>
</dbReference>
<dbReference type="GO" id="GO:0005634">
    <property type="term" value="C:nucleus"/>
    <property type="evidence" value="ECO:0000314"/>
    <property type="project" value="UniProtKB"/>
</dbReference>
<dbReference type="GO" id="GO:0003682">
    <property type="term" value="F:chromatin binding"/>
    <property type="evidence" value="ECO:0007669"/>
    <property type="project" value="Ensembl"/>
</dbReference>
<dbReference type="GO" id="GO:0000981">
    <property type="term" value="F:DNA-binding transcription factor activity, RNA polymerase II-specific"/>
    <property type="evidence" value="ECO:0000318"/>
    <property type="project" value="GO_Central"/>
</dbReference>
<dbReference type="GO" id="GO:0001227">
    <property type="term" value="F:DNA-binding transcription repressor activity, RNA polymerase II-specific"/>
    <property type="evidence" value="ECO:0000314"/>
    <property type="project" value="BHF-UCL"/>
</dbReference>
<dbReference type="GO" id="GO:0070888">
    <property type="term" value="F:E-box binding"/>
    <property type="evidence" value="ECO:0000314"/>
    <property type="project" value="BHF-UCL"/>
</dbReference>
<dbReference type="GO" id="GO:0000978">
    <property type="term" value="F:RNA polymerase II cis-regulatory region sequence-specific DNA binding"/>
    <property type="evidence" value="ECO:0000318"/>
    <property type="project" value="GO_Central"/>
</dbReference>
<dbReference type="GO" id="GO:0000977">
    <property type="term" value="F:RNA polymerase II transcription regulatory region sequence-specific DNA binding"/>
    <property type="evidence" value="ECO:0000314"/>
    <property type="project" value="BHF-UCL"/>
</dbReference>
<dbReference type="GO" id="GO:0043565">
    <property type="term" value="F:sequence-specific DNA binding"/>
    <property type="evidence" value="ECO:0000314"/>
    <property type="project" value="BHF-UCL"/>
</dbReference>
<dbReference type="GO" id="GO:1990837">
    <property type="term" value="F:sequence-specific double-stranded DNA binding"/>
    <property type="evidence" value="ECO:0000314"/>
    <property type="project" value="ARUK-UCL"/>
</dbReference>
<dbReference type="GO" id="GO:0008270">
    <property type="term" value="F:zinc ion binding"/>
    <property type="evidence" value="ECO:0007669"/>
    <property type="project" value="UniProtKB-KW"/>
</dbReference>
<dbReference type="GO" id="GO:0003180">
    <property type="term" value="P:aortic valve morphogenesis"/>
    <property type="evidence" value="ECO:0000304"/>
    <property type="project" value="BHF-UCL"/>
</dbReference>
<dbReference type="GO" id="GO:0060536">
    <property type="term" value="P:cartilage morphogenesis"/>
    <property type="evidence" value="ECO:0007669"/>
    <property type="project" value="Ensembl"/>
</dbReference>
<dbReference type="GO" id="GO:0003273">
    <property type="term" value="P:cell migration involved in endocardial cushion formation"/>
    <property type="evidence" value="ECO:0000250"/>
    <property type="project" value="BHF-UCL"/>
</dbReference>
<dbReference type="GO" id="GO:0071364">
    <property type="term" value="P:cellular response to epidermal growth factor stimulus"/>
    <property type="evidence" value="ECO:0000314"/>
    <property type="project" value="BHF-UCL"/>
</dbReference>
<dbReference type="GO" id="GO:0071479">
    <property type="term" value="P:cellular response to ionizing radiation"/>
    <property type="evidence" value="ECO:0007669"/>
    <property type="project" value="Ensembl"/>
</dbReference>
<dbReference type="GO" id="GO:0006325">
    <property type="term" value="P:chromatin organization"/>
    <property type="evidence" value="ECO:0007669"/>
    <property type="project" value="Ensembl"/>
</dbReference>
<dbReference type="GO" id="GO:0035921">
    <property type="term" value="P:desmosome disassembly"/>
    <property type="evidence" value="ECO:0000315"/>
    <property type="project" value="BHF-UCL"/>
</dbReference>
<dbReference type="GO" id="GO:0043542">
    <property type="term" value="P:endothelial cell migration"/>
    <property type="evidence" value="ECO:0007669"/>
    <property type="project" value="Ensembl"/>
</dbReference>
<dbReference type="GO" id="GO:0010631">
    <property type="term" value="P:epithelial cell migration"/>
    <property type="evidence" value="ECO:0007669"/>
    <property type="project" value="Ensembl"/>
</dbReference>
<dbReference type="GO" id="GO:0001837">
    <property type="term" value="P:epithelial to mesenchymal transition"/>
    <property type="evidence" value="ECO:0000315"/>
    <property type="project" value="BHF-UCL"/>
</dbReference>
<dbReference type="GO" id="GO:0003198">
    <property type="term" value="P:epithelial to mesenchymal transition involved in endocardial cushion formation"/>
    <property type="evidence" value="ECO:0000250"/>
    <property type="project" value="BHF-UCL"/>
</dbReference>
<dbReference type="GO" id="GO:0060429">
    <property type="term" value="P:epithelium development"/>
    <property type="evidence" value="ECO:0000250"/>
    <property type="project" value="BHF-UCL"/>
</dbReference>
<dbReference type="GO" id="GO:0071425">
    <property type="term" value="P:hematopoietic stem cell proliferation"/>
    <property type="evidence" value="ECO:0007669"/>
    <property type="project" value="Ensembl"/>
</dbReference>
<dbReference type="GO" id="GO:0033028">
    <property type="term" value="P:myeloid cell apoptotic process"/>
    <property type="evidence" value="ECO:0007669"/>
    <property type="project" value="Ensembl"/>
</dbReference>
<dbReference type="GO" id="GO:2000811">
    <property type="term" value="P:negative regulation of anoikis"/>
    <property type="evidence" value="ECO:0000315"/>
    <property type="project" value="BHF-UCL"/>
</dbReference>
<dbReference type="GO" id="GO:0090090">
    <property type="term" value="P:negative regulation of canonical Wnt signaling pathway"/>
    <property type="evidence" value="ECO:0000314"/>
    <property type="project" value="BHF-UCL"/>
</dbReference>
<dbReference type="GO" id="GO:0006933">
    <property type="term" value="P:negative regulation of cell adhesion involved in substrate-bound cell migration"/>
    <property type="evidence" value="ECO:0007669"/>
    <property type="project" value="Ensembl"/>
</dbReference>
<dbReference type="GO" id="GO:0033629">
    <property type="term" value="P:negative regulation of cell adhesion mediated by integrin"/>
    <property type="evidence" value="ECO:0000314"/>
    <property type="project" value="BHF-UCL"/>
</dbReference>
<dbReference type="GO" id="GO:0032331">
    <property type="term" value="P:negative regulation of chondrocyte differentiation"/>
    <property type="evidence" value="ECO:0000315"/>
    <property type="project" value="BHF-UCL"/>
</dbReference>
<dbReference type="GO" id="GO:0043518">
    <property type="term" value="P:negative regulation of DNA damage response, signal transduction by p53 class mediator"/>
    <property type="evidence" value="ECO:0000315"/>
    <property type="project" value="BHF-UCL"/>
</dbReference>
<dbReference type="GO" id="GO:2001240">
    <property type="term" value="P:negative regulation of extrinsic apoptotic signaling pathway in absence of ligand"/>
    <property type="evidence" value="ECO:0000250"/>
    <property type="project" value="BHF-UCL"/>
</dbReference>
<dbReference type="GO" id="GO:1902034">
    <property type="term" value="P:negative regulation of hematopoietic stem cell proliferation"/>
    <property type="evidence" value="ECO:0007669"/>
    <property type="project" value="Ensembl"/>
</dbReference>
<dbReference type="GO" id="GO:1902230">
    <property type="term" value="P:negative regulation of intrinsic apoptotic signaling pathway in response to DNA damage"/>
    <property type="evidence" value="ECO:0000315"/>
    <property type="project" value="BHF-UCL"/>
</dbReference>
<dbReference type="GO" id="GO:0010839">
    <property type="term" value="P:negative regulation of keratinocyte proliferation"/>
    <property type="evidence" value="ECO:0000314"/>
    <property type="project" value="BHF-UCL"/>
</dbReference>
<dbReference type="GO" id="GO:0033033">
    <property type="term" value="P:negative regulation of myeloid cell apoptotic process"/>
    <property type="evidence" value="ECO:0007669"/>
    <property type="project" value="Ensembl"/>
</dbReference>
<dbReference type="GO" id="GO:0000122">
    <property type="term" value="P:negative regulation of transcription by RNA polymerase II"/>
    <property type="evidence" value="ECO:0000314"/>
    <property type="project" value="BHF-UCL"/>
</dbReference>
<dbReference type="GO" id="GO:0010957">
    <property type="term" value="P:negative regulation of vitamin D biosynthetic process"/>
    <property type="evidence" value="ECO:0000314"/>
    <property type="project" value="BHF-UCL"/>
</dbReference>
<dbReference type="GO" id="GO:0070563">
    <property type="term" value="P:negative regulation of vitamin D receptor signaling pathway"/>
    <property type="evidence" value="ECO:0000314"/>
    <property type="project" value="BHF-UCL"/>
</dbReference>
<dbReference type="GO" id="GO:0014032">
    <property type="term" value="P:neural crest cell development"/>
    <property type="evidence" value="ECO:0000315"/>
    <property type="project" value="BHF-UCL"/>
</dbReference>
<dbReference type="GO" id="GO:0007219">
    <property type="term" value="P:Notch signaling pathway"/>
    <property type="evidence" value="ECO:0000315"/>
    <property type="project" value="BHF-UCL"/>
</dbReference>
<dbReference type="GO" id="GO:0001649">
    <property type="term" value="P:osteoblast differentiation"/>
    <property type="evidence" value="ECO:0000270"/>
    <property type="project" value="UniProtKB"/>
</dbReference>
<dbReference type="GO" id="GO:0043473">
    <property type="term" value="P:pigmentation"/>
    <property type="evidence" value="ECO:0000315"/>
    <property type="project" value="BHF-UCL"/>
</dbReference>
<dbReference type="GO" id="GO:0030335">
    <property type="term" value="P:positive regulation of cell migration"/>
    <property type="evidence" value="ECO:0000315"/>
    <property type="project" value="BHF-UCL"/>
</dbReference>
<dbReference type="GO" id="GO:0045600">
    <property type="term" value="P:positive regulation of fat cell differentiation"/>
    <property type="evidence" value="ECO:0007669"/>
    <property type="project" value="Ensembl"/>
</dbReference>
<dbReference type="GO" id="GO:2000810">
    <property type="term" value="P:regulation of bicellular tight junction assembly"/>
    <property type="evidence" value="ECO:0000315"/>
    <property type="project" value="BHF-UCL"/>
</dbReference>
<dbReference type="GO" id="GO:0060693">
    <property type="term" value="P:regulation of branching involved in salivary gland morphogenesis"/>
    <property type="evidence" value="ECO:0007669"/>
    <property type="project" value="Ensembl"/>
</dbReference>
<dbReference type="GO" id="GO:0032642">
    <property type="term" value="P:regulation of chemokine production"/>
    <property type="evidence" value="ECO:0000315"/>
    <property type="project" value="BHF-UCL"/>
</dbReference>
<dbReference type="GO" id="GO:0006355">
    <property type="term" value="P:regulation of DNA-templated transcription"/>
    <property type="evidence" value="ECO:0000318"/>
    <property type="project" value="GO_Central"/>
</dbReference>
<dbReference type="GO" id="GO:0045667">
    <property type="term" value="P:regulation of osteoblast differentiation"/>
    <property type="evidence" value="ECO:0000315"/>
    <property type="project" value="BHF-UCL"/>
</dbReference>
<dbReference type="GO" id="GO:0060021">
    <property type="term" value="P:roof of mouth development"/>
    <property type="evidence" value="ECO:0007669"/>
    <property type="project" value="Ensembl"/>
</dbReference>
<dbReference type="GO" id="GO:0007605">
    <property type="term" value="P:sensory perception of sound"/>
    <property type="evidence" value="ECO:0000315"/>
    <property type="project" value="BHF-UCL"/>
</dbReference>
<dbReference type="GO" id="GO:0050872">
    <property type="term" value="P:white fat cell differentiation"/>
    <property type="evidence" value="ECO:0007669"/>
    <property type="project" value="Ensembl"/>
</dbReference>
<dbReference type="FunFam" id="3.30.160.60:FF:000085">
    <property type="entry name" value="Snail zinc finger protein"/>
    <property type="match status" value="1"/>
</dbReference>
<dbReference type="FunFam" id="3.30.160.60:FF:000942">
    <property type="entry name" value="Snail zinc finger protein"/>
    <property type="match status" value="1"/>
</dbReference>
<dbReference type="FunFam" id="3.30.160.60:FF:001114">
    <property type="entry name" value="Zinc finger protein SNAI2"/>
    <property type="match status" value="1"/>
</dbReference>
<dbReference type="FunFam" id="3.30.160.60:FF:000207">
    <property type="entry name" value="zinc finger protein SNAI2"/>
    <property type="match status" value="1"/>
</dbReference>
<dbReference type="Gene3D" id="3.30.160.60">
    <property type="entry name" value="Classic Zinc Finger"/>
    <property type="match status" value="4"/>
</dbReference>
<dbReference type="InterPro" id="IPR050527">
    <property type="entry name" value="Snail/Krueppel_Znf"/>
</dbReference>
<dbReference type="InterPro" id="IPR036236">
    <property type="entry name" value="Znf_C2H2_sf"/>
</dbReference>
<dbReference type="InterPro" id="IPR013087">
    <property type="entry name" value="Znf_C2H2_type"/>
</dbReference>
<dbReference type="PANTHER" id="PTHR24388">
    <property type="entry name" value="ZINC FINGER PROTEIN"/>
    <property type="match status" value="1"/>
</dbReference>
<dbReference type="PANTHER" id="PTHR24388:SF42">
    <property type="entry name" value="ZINC FINGER PROTEIN SNAI2"/>
    <property type="match status" value="1"/>
</dbReference>
<dbReference type="Pfam" id="PF00096">
    <property type="entry name" value="zf-C2H2"/>
    <property type="match status" value="5"/>
</dbReference>
<dbReference type="SMART" id="SM00355">
    <property type="entry name" value="ZnF_C2H2"/>
    <property type="match status" value="5"/>
</dbReference>
<dbReference type="SUPFAM" id="SSF57667">
    <property type="entry name" value="beta-beta-alpha zinc fingers"/>
    <property type="match status" value="4"/>
</dbReference>
<dbReference type="PROSITE" id="PS00028">
    <property type="entry name" value="ZINC_FINGER_C2H2_1"/>
    <property type="match status" value="4"/>
</dbReference>
<dbReference type="PROSITE" id="PS50157">
    <property type="entry name" value="ZINC_FINGER_C2H2_2"/>
    <property type="match status" value="5"/>
</dbReference>